<comment type="catalytic activity">
    <reaction evidence="1">
        <text>2-(N(omega)-L-arginino)succinate = fumarate + L-arginine</text>
        <dbReference type="Rhea" id="RHEA:24020"/>
        <dbReference type="ChEBI" id="CHEBI:29806"/>
        <dbReference type="ChEBI" id="CHEBI:32682"/>
        <dbReference type="ChEBI" id="CHEBI:57472"/>
        <dbReference type="EC" id="4.3.2.1"/>
    </reaction>
</comment>
<comment type="pathway">
    <text evidence="1">Amino-acid biosynthesis; L-arginine biosynthesis; L-arginine from L-ornithine and carbamoyl phosphate: step 3/3.</text>
</comment>
<comment type="subcellular location">
    <subcellularLocation>
        <location evidence="1">Cytoplasm</location>
    </subcellularLocation>
</comment>
<comment type="similarity">
    <text evidence="1">Belongs to the lyase 1 family. Argininosuccinate lyase subfamily.</text>
</comment>
<accession>Q8ZKL6</accession>
<keyword id="KW-0028">Amino-acid biosynthesis</keyword>
<keyword id="KW-0055">Arginine biosynthesis</keyword>
<keyword id="KW-0963">Cytoplasm</keyword>
<keyword id="KW-0456">Lyase</keyword>
<keyword id="KW-1185">Reference proteome</keyword>
<proteinExistence type="inferred from homology"/>
<dbReference type="EC" id="4.3.2.1" evidence="1"/>
<dbReference type="EMBL" id="AE006468">
    <property type="protein sequence ID" value="AAL22962.1"/>
    <property type="molecule type" value="Genomic_DNA"/>
</dbReference>
<dbReference type="RefSeq" id="NP_463003.1">
    <property type="nucleotide sequence ID" value="NC_003197.2"/>
</dbReference>
<dbReference type="RefSeq" id="WP_001230051.1">
    <property type="nucleotide sequence ID" value="NC_003197.2"/>
</dbReference>
<dbReference type="SMR" id="Q8ZKL6"/>
<dbReference type="STRING" id="99287.STM4123"/>
<dbReference type="PaxDb" id="99287-STM4123"/>
<dbReference type="GeneID" id="1255650"/>
<dbReference type="KEGG" id="stm:STM4123"/>
<dbReference type="PATRIC" id="fig|99287.12.peg.4345"/>
<dbReference type="HOGENOM" id="CLU_027272_2_3_6"/>
<dbReference type="OMA" id="DFAIEFC"/>
<dbReference type="PhylomeDB" id="Q8ZKL6"/>
<dbReference type="BioCyc" id="SENT99287:STM4123-MONOMER"/>
<dbReference type="UniPathway" id="UPA00068">
    <property type="reaction ID" value="UER00114"/>
</dbReference>
<dbReference type="Proteomes" id="UP000001014">
    <property type="component" value="Chromosome"/>
</dbReference>
<dbReference type="GO" id="GO:0005829">
    <property type="term" value="C:cytosol"/>
    <property type="evidence" value="ECO:0000318"/>
    <property type="project" value="GO_Central"/>
</dbReference>
<dbReference type="GO" id="GO:0004056">
    <property type="term" value="F:argininosuccinate lyase activity"/>
    <property type="evidence" value="ECO:0000318"/>
    <property type="project" value="GO_Central"/>
</dbReference>
<dbReference type="GO" id="GO:0042450">
    <property type="term" value="P:arginine biosynthetic process via ornithine"/>
    <property type="evidence" value="ECO:0000318"/>
    <property type="project" value="GO_Central"/>
</dbReference>
<dbReference type="GO" id="GO:0006526">
    <property type="term" value="P:L-arginine biosynthetic process"/>
    <property type="evidence" value="ECO:0007669"/>
    <property type="project" value="UniProtKB-UniRule"/>
</dbReference>
<dbReference type="CDD" id="cd01359">
    <property type="entry name" value="Argininosuccinate_lyase"/>
    <property type="match status" value="1"/>
</dbReference>
<dbReference type="FunFam" id="1.10.275.10:FF:000004">
    <property type="entry name" value="Argininosuccinate lyase"/>
    <property type="match status" value="1"/>
</dbReference>
<dbReference type="FunFam" id="1.10.40.30:FF:000001">
    <property type="entry name" value="Argininosuccinate lyase"/>
    <property type="match status" value="1"/>
</dbReference>
<dbReference type="FunFam" id="1.20.200.10:FF:000006">
    <property type="entry name" value="Argininosuccinate lyase"/>
    <property type="match status" value="1"/>
</dbReference>
<dbReference type="Gene3D" id="1.10.40.30">
    <property type="entry name" value="Fumarase/aspartase (C-terminal domain)"/>
    <property type="match status" value="1"/>
</dbReference>
<dbReference type="Gene3D" id="1.20.200.10">
    <property type="entry name" value="Fumarase/aspartase (Central domain)"/>
    <property type="match status" value="1"/>
</dbReference>
<dbReference type="Gene3D" id="1.10.275.10">
    <property type="entry name" value="Fumarase/aspartase (N-terminal domain)"/>
    <property type="match status" value="1"/>
</dbReference>
<dbReference type="HAMAP" id="MF_00006">
    <property type="entry name" value="Arg_succ_lyase"/>
    <property type="match status" value="1"/>
</dbReference>
<dbReference type="InterPro" id="IPR029419">
    <property type="entry name" value="Arg_succ_lyase_C"/>
</dbReference>
<dbReference type="InterPro" id="IPR009049">
    <property type="entry name" value="Argininosuccinate_lyase"/>
</dbReference>
<dbReference type="InterPro" id="IPR024083">
    <property type="entry name" value="Fumarase/histidase_N"/>
</dbReference>
<dbReference type="InterPro" id="IPR020557">
    <property type="entry name" value="Fumarate_lyase_CS"/>
</dbReference>
<dbReference type="InterPro" id="IPR000362">
    <property type="entry name" value="Fumarate_lyase_fam"/>
</dbReference>
<dbReference type="InterPro" id="IPR022761">
    <property type="entry name" value="Fumarate_lyase_N"/>
</dbReference>
<dbReference type="InterPro" id="IPR008948">
    <property type="entry name" value="L-Aspartase-like"/>
</dbReference>
<dbReference type="NCBIfam" id="TIGR00838">
    <property type="entry name" value="argH"/>
    <property type="match status" value="1"/>
</dbReference>
<dbReference type="NCBIfam" id="NF008964">
    <property type="entry name" value="PRK12308.1"/>
    <property type="match status" value="1"/>
</dbReference>
<dbReference type="PANTHER" id="PTHR43814">
    <property type="entry name" value="ARGININOSUCCINATE LYASE"/>
    <property type="match status" value="1"/>
</dbReference>
<dbReference type="PANTHER" id="PTHR43814:SF1">
    <property type="entry name" value="ARGININOSUCCINATE LYASE"/>
    <property type="match status" value="1"/>
</dbReference>
<dbReference type="Pfam" id="PF14698">
    <property type="entry name" value="ASL_C2"/>
    <property type="match status" value="1"/>
</dbReference>
<dbReference type="Pfam" id="PF00206">
    <property type="entry name" value="Lyase_1"/>
    <property type="match status" value="1"/>
</dbReference>
<dbReference type="PRINTS" id="PR00145">
    <property type="entry name" value="ARGSUCLYASE"/>
</dbReference>
<dbReference type="PRINTS" id="PR00149">
    <property type="entry name" value="FUMRATELYASE"/>
</dbReference>
<dbReference type="SUPFAM" id="SSF48557">
    <property type="entry name" value="L-aspartase-like"/>
    <property type="match status" value="1"/>
</dbReference>
<dbReference type="PROSITE" id="PS00163">
    <property type="entry name" value="FUMARATE_LYASES"/>
    <property type="match status" value="1"/>
</dbReference>
<feature type="chain" id="PRO_0000137818" description="Argininosuccinate lyase">
    <location>
        <begin position="1"/>
        <end position="458"/>
    </location>
</feature>
<name>ARLY_SALTY</name>
<reference key="1">
    <citation type="journal article" date="2001" name="Nature">
        <title>Complete genome sequence of Salmonella enterica serovar Typhimurium LT2.</title>
        <authorList>
            <person name="McClelland M."/>
            <person name="Sanderson K.E."/>
            <person name="Spieth J."/>
            <person name="Clifton S.W."/>
            <person name="Latreille P."/>
            <person name="Courtney L."/>
            <person name="Porwollik S."/>
            <person name="Ali J."/>
            <person name="Dante M."/>
            <person name="Du F."/>
            <person name="Hou S."/>
            <person name="Layman D."/>
            <person name="Leonard S."/>
            <person name="Nguyen C."/>
            <person name="Scott K."/>
            <person name="Holmes A."/>
            <person name="Grewal N."/>
            <person name="Mulvaney E."/>
            <person name="Ryan E."/>
            <person name="Sun H."/>
            <person name="Florea L."/>
            <person name="Miller W."/>
            <person name="Stoneking T."/>
            <person name="Nhan M."/>
            <person name="Waterston R."/>
            <person name="Wilson R.K."/>
        </authorList>
    </citation>
    <scope>NUCLEOTIDE SEQUENCE [LARGE SCALE GENOMIC DNA]</scope>
    <source>
        <strain>LT2 / SGSC1412 / ATCC 700720</strain>
    </source>
</reference>
<protein>
    <recommendedName>
        <fullName evidence="1">Argininosuccinate lyase</fullName>
        <shortName evidence="1">ASAL</shortName>
        <ecNumber evidence="1">4.3.2.1</ecNumber>
    </recommendedName>
    <alternativeName>
        <fullName evidence="1">Arginosuccinase</fullName>
    </alternativeName>
</protein>
<organism>
    <name type="scientific">Salmonella typhimurium (strain LT2 / SGSC1412 / ATCC 700720)</name>
    <dbReference type="NCBI Taxonomy" id="99287"/>
    <lineage>
        <taxon>Bacteria</taxon>
        <taxon>Pseudomonadati</taxon>
        <taxon>Pseudomonadota</taxon>
        <taxon>Gammaproteobacteria</taxon>
        <taxon>Enterobacterales</taxon>
        <taxon>Enterobacteriaceae</taxon>
        <taxon>Salmonella</taxon>
    </lineage>
</organism>
<sequence>MALWGGRFTQAADQRFKQFNDSLRFDYRLAEQDIVGSVAWSKALVTVGVLTADEQRQLEEALNVLLEEVRANPQQILQSDAEDIHSWVEGKLIDKVGQLGKKLHTGRSRNDQVATDLKLWCKETVRELLTANRQLQSALVETAQANQDAVMPGYTHLQRAQPVTFAHWCLAYVEMLARDESRLQDTLKRLDVSPLGCGALAGTAYEIDREQLAGWLGFTSATRNSLDSVSDRDHVLELLSDAAIGMVHLSRFAEDLIFFNSGEAGFVELSDRVTSGSSLMPQKKNPDALELIRGKCGRVQGALTGMMMTLKGLPLAYNKDMQEDKEGLFDALDTWLDCLHMAALVLDGIQVKRPRCQDAAQQGYANATELADYLVAKGVPFREAHHIVGEAVVEAIRQGKPLEALPLADLQKFSRVIGDDVYPILSLQSCLDKRAAKGGVSPLQVAQAINDAKARLAL</sequence>
<gene>
    <name evidence="1" type="primary">argH</name>
    <name type="ordered locus">STM4123</name>
</gene>
<evidence type="ECO:0000255" key="1">
    <source>
        <dbReference type="HAMAP-Rule" id="MF_00006"/>
    </source>
</evidence>